<gene>
    <name evidence="1" type="primary">glmM</name>
    <name type="ordered locus">ZMO1002</name>
</gene>
<name>GLMM_ZYMMO</name>
<keyword id="KW-0413">Isomerase</keyword>
<keyword id="KW-0460">Magnesium</keyword>
<keyword id="KW-0479">Metal-binding</keyword>
<keyword id="KW-0597">Phosphoprotein</keyword>
<keyword id="KW-1185">Reference proteome</keyword>
<organism>
    <name type="scientific">Zymomonas mobilis subsp. mobilis (strain ATCC 31821 / ZM4 / CP4)</name>
    <dbReference type="NCBI Taxonomy" id="264203"/>
    <lineage>
        <taxon>Bacteria</taxon>
        <taxon>Pseudomonadati</taxon>
        <taxon>Pseudomonadota</taxon>
        <taxon>Alphaproteobacteria</taxon>
        <taxon>Sphingomonadales</taxon>
        <taxon>Zymomonadaceae</taxon>
        <taxon>Zymomonas</taxon>
    </lineage>
</organism>
<sequence>MSRQYFGTDGIRGCTNKDPMTADVAMRVGQAAGAYFKRGLHRHRVLIGKDTRLSGYMVESALMAGFTSVGMDVVLVGPLPTPGVALLTRSMRADLGVMISASHNPFSDNGIKLFGPNGYKLSEEEEKAIEEAIDQPPLLAAPADIGRARRIDDAQGRYIHAVKSSFPESLRLDKLRLVLDCANGAAYQVAPAVLWELGAEVITLGVAPNGLNINDHCGSTDPSALQKKVLETRADLGIALDGDADRVIIVDEKGEIVDGDQIMALIATSAQKRNLLKGNTTVATVMSNLGLERYLSKLGIQLLRTQVGDRHVVEAMRAGGYTVGGEQSGHIILSYHTTTGDGLVAALQVLADLVQSDKKASELLHVFDPFPQLLKNVRYSSGQPLEDESVCEAISEAEESLKGKGRLLIRKSGTEPLIRVMAEAEDPDLVHQIVDHICETVRRAA</sequence>
<feature type="chain" id="PRO_0000148012" description="Phosphoglucosamine mutase">
    <location>
        <begin position="1"/>
        <end position="445"/>
    </location>
</feature>
<feature type="active site" description="Phosphoserine intermediate" evidence="1">
    <location>
        <position position="102"/>
    </location>
</feature>
<feature type="binding site" description="via phosphate group" evidence="1">
    <location>
        <position position="102"/>
    </location>
    <ligand>
        <name>Mg(2+)</name>
        <dbReference type="ChEBI" id="CHEBI:18420"/>
    </ligand>
</feature>
<feature type="binding site" evidence="1">
    <location>
        <position position="241"/>
    </location>
    <ligand>
        <name>Mg(2+)</name>
        <dbReference type="ChEBI" id="CHEBI:18420"/>
    </ligand>
</feature>
<feature type="binding site" evidence="1">
    <location>
        <position position="243"/>
    </location>
    <ligand>
        <name>Mg(2+)</name>
        <dbReference type="ChEBI" id="CHEBI:18420"/>
    </ligand>
</feature>
<feature type="binding site" evidence="1">
    <location>
        <position position="245"/>
    </location>
    <ligand>
        <name>Mg(2+)</name>
        <dbReference type="ChEBI" id="CHEBI:18420"/>
    </ligand>
</feature>
<feature type="modified residue" description="Phosphoserine" evidence="1">
    <location>
        <position position="102"/>
    </location>
</feature>
<protein>
    <recommendedName>
        <fullName evidence="1">Phosphoglucosamine mutase</fullName>
        <ecNumber evidence="1">5.4.2.10</ecNumber>
    </recommendedName>
</protein>
<reference key="1">
    <citation type="journal article" date="2005" name="Nat. Biotechnol.">
        <title>The genome sequence of the ethanologenic bacterium Zymomonas mobilis ZM4.</title>
        <authorList>
            <person name="Seo J.-S."/>
            <person name="Chong H."/>
            <person name="Park H.S."/>
            <person name="Yoon K.-O."/>
            <person name="Jung C."/>
            <person name="Kim J.J."/>
            <person name="Hong J.H."/>
            <person name="Kim H."/>
            <person name="Kim J.-H."/>
            <person name="Kil J.-I."/>
            <person name="Park C.J."/>
            <person name="Oh H.-M."/>
            <person name="Lee J.-S."/>
            <person name="Jin S.-J."/>
            <person name="Um H.-W."/>
            <person name="Lee H.-J."/>
            <person name="Oh S.-J."/>
            <person name="Kim J.Y."/>
            <person name="Kang H.L."/>
            <person name="Lee S.Y."/>
            <person name="Lee K.J."/>
            <person name="Kang H.S."/>
        </authorList>
    </citation>
    <scope>NUCLEOTIDE SEQUENCE [LARGE SCALE GENOMIC DNA]</scope>
    <source>
        <strain>ATCC 31821 / ZM4 / CP4</strain>
    </source>
</reference>
<comment type="function">
    <text evidence="1">Catalyzes the conversion of glucosamine-6-phosphate to glucosamine-1-phosphate.</text>
</comment>
<comment type="catalytic activity">
    <reaction evidence="1">
        <text>alpha-D-glucosamine 1-phosphate = D-glucosamine 6-phosphate</text>
        <dbReference type="Rhea" id="RHEA:23424"/>
        <dbReference type="ChEBI" id="CHEBI:58516"/>
        <dbReference type="ChEBI" id="CHEBI:58725"/>
        <dbReference type="EC" id="5.4.2.10"/>
    </reaction>
</comment>
<comment type="cofactor">
    <cofactor evidence="1">
        <name>Mg(2+)</name>
        <dbReference type="ChEBI" id="CHEBI:18420"/>
    </cofactor>
    <text evidence="1">Binds 1 Mg(2+) ion per subunit.</text>
</comment>
<comment type="PTM">
    <text evidence="1">Activated by phosphorylation.</text>
</comment>
<comment type="similarity">
    <text evidence="1">Belongs to the phosphohexose mutase family.</text>
</comment>
<accession>Q5NNT4</accession>
<evidence type="ECO:0000255" key="1">
    <source>
        <dbReference type="HAMAP-Rule" id="MF_01554"/>
    </source>
</evidence>
<proteinExistence type="inferred from homology"/>
<dbReference type="EC" id="5.4.2.10" evidence="1"/>
<dbReference type="EMBL" id="AE008692">
    <property type="protein sequence ID" value="AAV89626.1"/>
    <property type="molecule type" value="Genomic_DNA"/>
</dbReference>
<dbReference type="RefSeq" id="WP_011240851.1">
    <property type="nucleotide sequence ID" value="NZ_CP035711.1"/>
</dbReference>
<dbReference type="SMR" id="Q5NNT4"/>
<dbReference type="STRING" id="264203.ZMO1002"/>
<dbReference type="KEGG" id="zmo:ZMO1002"/>
<dbReference type="eggNOG" id="COG1109">
    <property type="taxonomic scope" value="Bacteria"/>
</dbReference>
<dbReference type="HOGENOM" id="CLU_016950_7_0_5"/>
<dbReference type="Proteomes" id="UP000001173">
    <property type="component" value="Chromosome"/>
</dbReference>
<dbReference type="GO" id="GO:0005829">
    <property type="term" value="C:cytosol"/>
    <property type="evidence" value="ECO:0007669"/>
    <property type="project" value="TreeGrafter"/>
</dbReference>
<dbReference type="GO" id="GO:0000287">
    <property type="term" value="F:magnesium ion binding"/>
    <property type="evidence" value="ECO:0007669"/>
    <property type="project" value="UniProtKB-UniRule"/>
</dbReference>
<dbReference type="GO" id="GO:0008966">
    <property type="term" value="F:phosphoglucosamine mutase activity"/>
    <property type="evidence" value="ECO:0007669"/>
    <property type="project" value="UniProtKB-UniRule"/>
</dbReference>
<dbReference type="GO" id="GO:0004615">
    <property type="term" value="F:phosphomannomutase activity"/>
    <property type="evidence" value="ECO:0007669"/>
    <property type="project" value="TreeGrafter"/>
</dbReference>
<dbReference type="GO" id="GO:0005975">
    <property type="term" value="P:carbohydrate metabolic process"/>
    <property type="evidence" value="ECO:0007669"/>
    <property type="project" value="InterPro"/>
</dbReference>
<dbReference type="GO" id="GO:0009252">
    <property type="term" value="P:peptidoglycan biosynthetic process"/>
    <property type="evidence" value="ECO:0007669"/>
    <property type="project" value="TreeGrafter"/>
</dbReference>
<dbReference type="GO" id="GO:0006048">
    <property type="term" value="P:UDP-N-acetylglucosamine biosynthetic process"/>
    <property type="evidence" value="ECO:0007669"/>
    <property type="project" value="TreeGrafter"/>
</dbReference>
<dbReference type="CDD" id="cd05802">
    <property type="entry name" value="GlmM"/>
    <property type="match status" value="1"/>
</dbReference>
<dbReference type="FunFam" id="3.30.310.50:FF:000001">
    <property type="entry name" value="Phosphoglucosamine mutase"/>
    <property type="match status" value="1"/>
</dbReference>
<dbReference type="FunFam" id="3.40.120.10:FF:000001">
    <property type="entry name" value="Phosphoglucosamine mutase"/>
    <property type="match status" value="1"/>
</dbReference>
<dbReference type="FunFam" id="3.40.120.10:FF:000003">
    <property type="entry name" value="Phosphoglucosamine mutase"/>
    <property type="match status" value="1"/>
</dbReference>
<dbReference type="Gene3D" id="3.40.120.10">
    <property type="entry name" value="Alpha-D-Glucose-1,6-Bisphosphate, subunit A, domain 3"/>
    <property type="match status" value="3"/>
</dbReference>
<dbReference type="Gene3D" id="3.30.310.50">
    <property type="entry name" value="Alpha-D-phosphohexomutase, C-terminal domain"/>
    <property type="match status" value="1"/>
</dbReference>
<dbReference type="HAMAP" id="MF_01554_B">
    <property type="entry name" value="GlmM_B"/>
    <property type="match status" value="1"/>
</dbReference>
<dbReference type="InterPro" id="IPR005844">
    <property type="entry name" value="A-D-PHexomutase_a/b/a-I"/>
</dbReference>
<dbReference type="InterPro" id="IPR016055">
    <property type="entry name" value="A-D-PHexomutase_a/b/a-I/II/III"/>
</dbReference>
<dbReference type="InterPro" id="IPR005845">
    <property type="entry name" value="A-D-PHexomutase_a/b/a-II"/>
</dbReference>
<dbReference type="InterPro" id="IPR005846">
    <property type="entry name" value="A-D-PHexomutase_a/b/a-III"/>
</dbReference>
<dbReference type="InterPro" id="IPR005843">
    <property type="entry name" value="A-D-PHexomutase_C"/>
</dbReference>
<dbReference type="InterPro" id="IPR036900">
    <property type="entry name" value="A-D-PHexomutase_C_sf"/>
</dbReference>
<dbReference type="InterPro" id="IPR016066">
    <property type="entry name" value="A-D-PHexomutase_CS"/>
</dbReference>
<dbReference type="InterPro" id="IPR005841">
    <property type="entry name" value="Alpha-D-phosphohexomutase_SF"/>
</dbReference>
<dbReference type="InterPro" id="IPR006352">
    <property type="entry name" value="GlmM_bact"/>
</dbReference>
<dbReference type="InterPro" id="IPR050060">
    <property type="entry name" value="Phosphoglucosamine_mutase"/>
</dbReference>
<dbReference type="NCBIfam" id="TIGR01455">
    <property type="entry name" value="glmM"/>
    <property type="match status" value="1"/>
</dbReference>
<dbReference type="NCBIfam" id="NF008139">
    <property type="entry name" value="PRK10887.1"/>
    <property type="match status" value="1"/>
</dbReference>
<dbReference type="PANTHER" id="PTHR42946:SF1">
    <property type="entry name" value="PHOSPHOGLUCOMUTASE (ALPHA-D-GLUCOSE-1,6-BISPHOSPHATE-DEPENDENT)"/>
    <property type="match status" value="1"/>
</dbReference>
<dbReference type="PANTHER" id="PTHR42946">
    <property type="entry name" value="PHOSPHOHEXOSE MUTASE"/>
    <property type="match status" value="1"/>
</dbReference>
<dbReference type="Pfam" id="PF02878">
    <property type="entry name" value="PGM_PMM_I"/>
    <property type="match status" value="1"/>
</dbReference>
<dbReference type="Pfam" id="PF02879">
    <property type="entry name" value="PGM_PMM_II"/>
    <property type="match status" value="1"/>
</dbReference>
<dbReference type="Pfam" id="PF02880">
    <property type="entry name" value="PGM_PMM_III"/>
    <property type="match status" value="1"/>
</dbReference>
<dbReference type="Pfam" id="PF00408">
    <property type="entry name" value="PGM_PMM_IV"/>
    <property type="match status" value="1"/>
</dbReference>
<dbReference type="PRINTS" id="PR00509">
    <property type="entry name" value="PGMPMM"/>
</dbReference>
<dbReference type="SUPFAM" id="SSF55957">
    <property type="entry name" value="Phosphoglucomutase, C-terminal domain"/>
    <property type="match status" value="1"/>
</dbReference>
<dbReference type="SUPFAM" id="SSF53738">
    <property type="entry name" value="Phosphoglucomutase, first 3 domains"/>
    <property type="match status" value="3"/>
</dbReference>
<dbReference type="PROSITE" id="PS00710">
    <property type="entry name" value="PGM_PMM"/>
    <property type="match status" value="1"/>
</dbReference>